<evidence type="ECO:0000255" key="1">
    <source>
        <dbReference type="HAMAP-Rule" id="MF_01225"/>
    </source>
</evidence>
<evidence type="ECO:0000255" key="2">
    <source>
        <dbReference type="PROSITE-ProRule" id="PRU01266"/>
    </source>
</evidence>
<protein>
    <recommendedName>
        <fullName evidence="1">GTP 3',8-cyclase</fullName>
        <ecNumber evidence="1">4.1.99.22</ecNumber>
    </recommendedName>
    <alternativeName>
        <fullName evidence="1">Molybdenum cofactor biosynthesis protein A</fullName>
    </alternativeName>
</protein>
<sequence length="340" mass="39078">MVEQIKDKLGRPIRDLRLSVTDRCNFRCDYCMPKEVFGDDFVFLPKNELLTFDEMARIAKVYAELGVKKIRITGGEPLMRRDLDVLIAKLNQIDGIEDIGLTTNGLLLKKHGQKLYDAGLRRINVSLDAIDDTLFQSINNRNIKATTILEQIDYATSIGLNVKVNVVIQKGINDDQIIPMLEYFKDKHIEIRFIEFMDVGNDNGWDFSKVVTKDEMLTMIEQHFEIDPVEPKYFGEVAKYYRHKDNGVQFGLITSVSQSFCSTCTRARLSSDGKFYGCLFATVDGFNVKAFIRSGVTDEELKEQFKALWQIRDDRYSDERTAQTVANRQRKKINMNYIGG</sequence>
<organism>
    <name type="scientific">Staphylococcus aureus (strain USA300 / TCH1516)</name>
    <dbReference type="NCBI Taxonomy" id="451516"/>
    <lineage>
        <taxon>Bacteria</taxon>
        <taxon>Bacillati</taxon>
        <taxon>Bacillota</taxon>
        <taxon>Bacilli</taxon>
        <taxon>Bacillales</taxon>
        <taxon>Staphylococcaceae</taxon>
        <taxon>Staphylococcus</taxon>
    </lineage>
</organism>
<accession>A8Z366</accession>
<name>MOAA_STAAT</name>
<keyword id="KW-0004">4Fe-4S</keyword>
<keyword id="KW-0342">GTP-binding</keyword>
<keyword id="KW-0408">Iron</keyword>
<keyword id="KW-0411">Iron-sulfur</keyword>
<keyword id="KW-0456">Lyase</keyword>
<keyword id="KW-0479">Metal-binding</keyword>
<keyword id="KW-0501">Molybdenum cofactor biosynthesis</keyword>
<keyword id="KW-0547">Nucleotide-binding</keyword>
<keyword id="KW-0949">S-adenosyl-L-methionine</keyword>
<dbReference type="EC" id="4.1.99.22" evidence="1"/>
<dbReference type="EMBL" id="CP000730">
    <property type="protein sequence ID" value="ABX30243.1"/>
    <property type="molecule type" value="Genomic_DNA"/>
</dbReference>
<dbReference type="RefSeq" id="WP_000230173.1">
    <property type="nucleotide sequence ID" value="NC_010079.1"/>
</dbReference>
<dbReference type="SMR" id="A8Z366"/>
<dbReference type="KEGG" id="sax:USA300HOU_2250"/>
<dbReference type="HOGENOM" id="CLU_009273_0_1_9"/>
<dbReference type="UniPathway" id="UPA00344"/>
<dbReference type="GO" id="GO:0051539">
    <property type="term" value="F:4 iron, 4 sulfur cluster binding"/>
    <property type="evidence" value="ECO:0007669"/>
    <property type="project" value="UniProtKB-UniRule"/>
</dbReference>
<dbReference type="GO" id="GO:0061799">
    <property type="term" value="F:cyclic pyranopterin monophosphate synthase activity"/>
    <property type="evidence" value="ECO:0007669"/>
    <property type="project" value="TreeGrafter"/>
</dbReference>
<dbReference type="GO" id="GO:0061798">
    <property type="term" value="F:GTP 3',8'-cyclase activity"/>
    <property type="evidence" value="ECO:0007669"/>
    <property type="project" value="UniProtKB-UniRule"/>
</dbReference>
<dbReference type="GO" id="GO:0005525">
    <property type="term" value="F:GTP binding"/>
    <property type="evidence" value="ECO:0007669"/>
    <property type="project" value="UniProtKB-UniRule"/>
</dbReference>
<dbReference type="GO" id="GO:0046872">
    <property type="term" value="F:metal ion binding"/>
    <property type="evidence" value="ECO:0007669"/>
    <property type="project" value="UniProtKB-KW"/>
</dbReference>
<dbReference type="GO" id="GO:1904047">
    <property type="term" value="F:S-adenosyl-L-methionine binding"/>
    <property type="evidence" value="ECO:0007669"/>
    <property type="project" value="UniProtKB-UniRule"/>
</dbReference>
<dbReference type="GO" id="GO:0006777">
    <property type="term" value="P:Mo-molybdopterin cofactor biosynthetic process"/>
    <property type="evidence" value="ECO:0007669"/>
    <property type="project" value="UniProtKB-UniRule"/>
</dbReference>
<dbReference type="CDD" id="cd01335">
    <property type="entry name" value="Radical_SAM"/>
    <property type="match status" value="1"/>
</dbReference>
<dbReference type="CDD" id="cd21117">
    <property type="entry name" value="Twitch_MoaA"/>
    <property type="match status" value="1"/>
</dbReference>
<dbReference type="Gene3D" id="3.20.20.70">
    <property type="entry name" value="Aldolase class I"/>
    <property type="match status" value="1"/>
</dbReference>
<dbReference type="HAMAP" id="MF_01225_B">
    <property type="entry name" value="MoaA_B"/>
    <property type="match status" value="1"/>
</dbReference>
<dbReference type="InterPro" id="IPR013785">
    <property type="entry name" value="Aldolase_TIM"/>
</dbReference>
<dbReference type="InterPro" id="IPR006638">
    <property type="entry name" value="Elp3/MiaA/NifB-like_rSAM"/>
</dbReference>
<dbReference type="InterPro" id="IPR013483">
    <property type="entry name" value="MoaA"/>
</dbReference>
<dbReference type="InterPro" id="IPR000385">
    <property type="entry name" value="MoaA_NifB_PqqE_Fe-S-bd_CS"/>
</dbReference>
<dbReference type="InterPro" id="IPR010505">
    <property type="entry name" value="MoaA_twitch"/>
</dbReference>
<dbReference type="InterPro" id="IPR050105">
    <property type="entry name" value="MoCo_biosynth_MoaA/MoaC"/>
</dbReference>
<dbReference type="InterPro" id="IPR007197">
    <property type="entry name" value="rSAM"/>
</dbReference>
<dbReference type="NCBIfam" id="TIGR02666">
    <property type="entry name" value="moaA"/>
    <property type="match status" value="1"/>
</dbReference>
<dbReference type="PANTHER" id="PTHR22960:SF0">
    <property type="entry name" value="MOLYBDENUM COFACTOR BIOSYNTHESIS PROTEIN 1"/>
    <property type="match status" value="1"/>
</dbReference>
<dbReference type="PANTHER" id="PTHR22960">
    <property type="entry name" value="MOLYBDOPTERIN COFACTOR SYNTHESIS PROTEIN A"/>
    <property type="match status" value="1"/>
</dbReference>
<dbReference type="Pfam" id="PF06463">
    <property type="entry name" value="Mob_synth_C"/>
    <property type="match status" value="1"/>
</dbReference>
<dbReference type="Pfam" id="PF04055">
    <property type="entry name" value="Radical_SAM"/>
    <property type="match status" value="1"/>
</dbReference>
<dbReference type="SFLD" id="SFLDF00276">
    <property type="entry name" value="cyclic_pyranopterin_phosphate"/>
    <property type="match status" value="1"/>
</dbReference>
<dbReference type="SFLD" id="SFLDG01216">
    <property type="entry name" value="thioether_bond_formation_requi"/>
    <property type="match status" value="1"/>
</dbReference>
<dbReference type="SMART" id="SM00729">
    <property type="entry name" value="Elp3"/>
    <property type="match status" value="1"/>
</dbReference>
<dbReference type="SUPFAM" id="SSF102114">
    <property type="entry name" value="Radical SAM enzymes"/>
    <property type="match status" value="1"/>
</dbReference>
<dbReference type="PROSITE" id="PS01305">
    <property type="entry name" value="MOAA_NIFB_PQQE"/>
    <property type="match status" value="1"/>
</dbReference>
<dbReference type="PROSITE" id="PS51918">
    <property type="entry name" value="RADICAL_SAM"/>
    <property type="match status" value="1"/>
</dbReference>
<gene>
    <name evidence="1" type="primary">moaA</name>
    <name type="ordered locus">USA300HOU_2250</name>
</gene>
<comment type="function">
    <text evidence="1">Catalyzes the cyclization of GTP to (8S)-3',8-cyclo-7,8-dihydroguanosine 5'-triphosphate.</text>
</comment>
<comment type="catalytic activity">
    <reaction evidence="1">
        <text>GTP + AH2 + S-adenosyl-L-methionine = (8S)-3',8-cyclo-7,8-dihydroguanosine 5'-triphosphate + 5'-deoxyadenosine + L-methionine + A + H(+)</text>
        <dbReference type="Rhea" id="RHEA:49576"/>
        <dbReference type="ChEBI" id="CHEBI:13193"/>
        <dbReference type="ChEBI" id="CHEBI:15378"/>
        <dbReference type="ChEBI" id="CHEBI:17319"/>
        <dbReference type="ChEBI" id="CHEBI:17499"/>
        <dbReference type="ChEBI" id="CHEBI:37565"/>
        <dbReference type="ChEBI" id="CHEBI:57844"/>
        <dbReference type="ChEBI" id="CHEBI:59789"/>
        <dbReference type="ChEBI" id="CHEBI:131766"/>
        <dbReference type="EC" id="4.1.99.22"/>
    </reaction>
</comment>
<comment type="cofactor">
    <cofactor evidence="1">
        <name>[4Fe-4S] cluster</name>
        <dbReference type="ChEBI" id="CHEBI:49883"/>
    </cofactor>
    <text evidence="1">Binds 2 [4Fe-4S] clusters. Binds 1 [4Fe-4S] cluster coordinated with 3 cysteines and an exchangeable S-adenosyl-L-methionine and 1 [4Fe-4S] cluster coordinated with 3 cysteines and the GTP-derived substrate.</text>
</comment>
<comment type="pathway">
    <text evidence="1">Cofactor biosynthesis; molybdopterin biosynthesis.</text>
</comment>
<comment type="subunit">
    <text evidence="1">Monomer and homodimer.</text>
</comment>
<comment type="similarity">
    <text evidence="1">Belongs to the radical SAM superfamily. MoaA family.</text>
</comment>
<reference key="1">
    <citation type="journal article" date="2007" name="BMC Microbiol.">
        <title>Subtle genetic changes enhance virulence of methicillin resistant and sensitive Staphylococcus aureus.</title>
        <authorList>
            <person name="Highlander S.K."/>
            <person name="Hulten K.G."/>
            <person name="Qin X."/>
            <person name="Jiang H."/>
            <person name="Yerrapragada S."/>
            <person name="Mason E.O. Jr."/>
            <person name="Shang Y."/>
            <person name="Williams T.M."/>
            <person name="Fortunov R.M."/>
            <person name="Liu Y."/>
            <person name="Igboeli O."/>
            <person name="Petrosino J."/>
            <person name="Tirumalai M."/>
            <person name="Uzman A."/>
            <person name="Fox G.E."/>
            <person name="Cardenas A.M."/>
            <person name="Muzny D.M."/>
            <person name="Hemphill L."/>
            <person name="Ding Y."/>
            <person name="Dugan S."/>
            <person name="Blyth P.R."/>
            <person name="Buhay C.J."/>
            <person name="Dinh H.H."/>
            <person name="Hawes A.C."/>
            <person name="Holder M."/>
            <person name="Kovar C.L."/>
            <person name="Lee S.L."/>
            <person name="Liu W."/>
            <person name="Nazareth L.V."/>
            <person name="Wang Q."/>
            <person name="Zhou J."/>
            <person name="Kaplan S.L."/>
            <person name="Weinstock G.M."/>
        </authorList>
    </citation>
    <scope>NUCLEOTIDE SEQUENCE [LARGE SCALE GENOMIC DNA]</scope>
    <source>
        <strain>USA300 / TCH1516</strain>
    </source>
</reference>
<feature type="chain" id="PRO_1000085711" description="GTP 3',8-cyclase">
    <location>
        <begin position="1"/>
        <end position="340"/>
    </location>
</feature>
<feature type="domain" description="Radical SAM core" evidence="2">
    <location>
        <begin position="8"/>
        <end position="227"/>
    </location>
</feature>
<feature type="binding site" evidence="1">
    <location>
        <position position="17"/>
    </location>
    <ligand>
        <name>GTP</name>
        <dbReference type="ChEBI" id="CHEBI:37565"/>
    </ligand>
</feature>
<feature type="binding site" evidence="1">
    <location>
        <position position="24"/>
    </location>
    <ligand>
        <name>[4Fe-4S] cluster</name>
        <dbReference type="ChEBI" id="CHEBI:49883"/>
        <label>1</label>
        <note>4Fe-4S-S-AdoMet</note>
    </ligand>
</feature>
<feature type="binding site" evidence="1">
    <location>
        <position position="28"/>
    </location>
    <ligand>
        <name>[4Fe-4S] cluster</name>
        <dbReference type="ChEBI" id="CHEBI:49883"/>
        <label>1</label>
        <note>4Fe-4S-S-AdoMet</note>
    </ligand>
</feature>
<feature type="binding site" evidence="1">
    <location>
        <position position="30"/>
    </location>
    <ligand>
        <name>S-adenosyl-L-methionine</name>
        <dbReference type="ChEBI" id="CHEBI:59789"/>
    </ligand>
</feature>
<feature type="binding site" evidence="1">
    <location>
        <position position="31"/>
    </location>
    <ligand>
        <name>[4Fe-4S] cluster</name>
        <dbReference type="ChEBI" id="CHEBI:49883"/>
        <label>1</label>
        <note>4Fe-4S-S-AdoMet</note>
    </ligand>
</feature>
<feature type="binding site" evidence="1">
    <location>
        <position position="71"/>
    </location>
    <ligand>
        <name>GTP</name>
        <dbReference type="ChEBI" id="CHEBI:37565"/>
    </ligand>
</feature>
<feature type="binding site" evidence="1">
    <location>
        <position position="75"/>
    </location>
    <ligand>
        <name>S-adenosyl-L-methionine</name>
        <dbReference type="ChEBI" id="CHEBI:59789"/>
    </ligand>
</feature>
<feature type="binding site" evidence="1">
    <location>
        <position position="102"/>
    </location>
    <ligand>
        <name>GTP</name>
        <dbReference type="ChEBI" id="CHEBI:37565"/>
    </ligand>
</feature>
<feature type="binding site" evidence="1">
    <location>
        <position position="126"/>
    </location>
    <ligand>
        <name>S-adenosyl-L-methionine</name>
        <dbReference type="ChEBI" id="CHEBI:59789"/>
    </ligand>
</feature>
<feature type="binding site" evidence="1">
    <location>
        <position position="163"/>
    </location>
    <ligand>
        <name>GTP</name>
        <dbReference type="ChEBI" id="CHEBI:37565"/>
    </ligand>
</feature>
<feature type="binding site" evidence="1">
    <location>
        <position position="197"/>
    </location>
    <ligand>
        <name>S-adenosyl-L-methionine</name>
        <dbReference type="ChEBI" id="CHEBI:59789"/>
    </ligand>
</feature>
<feature type="binding site" evidence="1">
    <location>
        <position position="261"/>
    </location>
    <ligand>
        <name>[4Fe-4S] cluster</name>
        <dbReference type="ChEBI" id="CHEBI:49883"/>
        <label>2</label>
        <note>4Fe-4S-substrate</note>
    </ligand>
</feature>
<feature type="binding site" evidence="1">
    <location>
        <position position="264"/>
    </location>
    <ligand>
        <name>[4Fe-4S] cluster</name>
        <dbReference type="ChEBI" id="CHEBI:49883"/>
        <label>2</label>
        <note>4Fe-4S-substrate</note>
    </ligand>
</feature>
<feature type="binding site" evidence="1">
    <location>
        <begin position="266"/>
        <end position="268"/>
    </location>
    <ligand>
        <name>GTP</name>
        <dbReference type="ChEBI" id="CHEBI:37565"/>
    </ligand>
</feature>
<feature type="binding site" evidence="1">
    <location>
        <position position="278"/>
    </location>
    <ligand>
        <name>[4Fe-4S] cluster</name>
        <dbReference type="ChEBI" id="CHEBI:49883"/>
        <label>2</label>
        <note>4Fe-4S-substrate</note>
    </ligand>
</feature>
<proteinExistence type="inferred from homology"/>